<sequence length="274" mass="29720">MEALRQRIEAAFEARADITPSTVDASVRDDVQNVINMLDKGEVRVAEKIDGQWHVHQWLKKAVLLSFRIFDNVVIDGAETKYFDKVPLKFAEYDEARFKAEAIRVVPSATVRKGSFIGKNTVLMPSYVNLGAYVDEGTMVDTWATVGSCAQIGKNVHLSGGVGIGGVLEPLQAGPTIIEDNCFIGARSEIVEGVVVEEGSVISMGVYIGQSTRIYDRETGEVHYGRVPAGSVVVSGNLPSACGKYSLYAAIIVKKVDAKTRGKVGINELLRIVD</sequence>
<dbReference type="EC" id="2.3.1.117" evidence="1"/>
<dbReference type="EMBL" id="CP000891">
    <property type="protein sequence ID" value="ABX48651.1"/>
    <property type="molecule type" value="Genomic_DNA"/>
</dbReference>
<dbReference type="RefSeq" id="WP_006080976.1">
    <property type="nucleotide sequence ID" value="NC_009997.1"/>
</dbReference>
<dbReference type="SMR" id="A9KUK2"/>
<dbReference type="GeneID" id="11771727"/>
<dbReference type="KEGG" id="sbn:Sbal195_1478"/>
<dbReference type="HOGENOM" id="CLU_050859_0_1_6"/>
<dbReference type="UniPathway" id="UPA00034">
    <property type="reaction ID" value="UER00019"/>
</dbReference>
<dbReference type="Proteomes" id="UP000000770">
    <property type="component" value="Chromosome"/>
</dbReference>
<dbReference type="GO" id="GO:0005737">
    <property type="term" value="C:cytoplasm"/>
    <property type="evidence" value="ECO:0007669"/>
    <property type="project" value="UniProtKB-SubCell"/>
</dbReference>
<dbReference type="GO" id="GO:0008666">
    <property type="term" value="F:2,3,4,5-tetrahydropyridine-2,6-dicarboxylate N-succinyltransferase activity"/>
    <property type="evidence" value="ECO:0007669"/>
    <property type="project" value="UniProtKB-UniRule"/>
</dbReference>
<dbReference type="GO" id="GO:0016779">
    <property type="term" value="F:nucleotidyltransferase activity"/>
    <property type="evidence" value="ECO:0007669"/>
    <property type="project" value="TreeGrafter"/>
</dbReference>
<dbReference type="GO" id="GO:0019877">
    <property type="term" value="P:diaminopimelate biosynthetic process"/>
    <property type="evidence" value="ECO:0007669"/>
    <property type="project" value="UniProtKB-UniRule"/>
</dbReference>
<dbReference type="GO" id="GO:0009089">
    <property type="term" value="P:lysine biosynthetic process via diaminopimelate"/>
    <property type="evidence" value="ECO:0007669"/>
    <property type="project" value="UniProtKB-UniRule"/>
</dbReference>
<dbReference type="CDD" id="cd03350">
    <property type="entry name" value="LbH_THP_succinylT"/>
    <property type="match status" value="1"/>
</dbReference>
<dbReference type="Gene3D" id="2.160.10.10">
    <property type="entry name" value="Hexapeptide repeat proteins"/>
    <property type="match status" value="1"/>
</dbReference>
<dbReference type="Gene3D" id="1.10.166.10">
    <property type="entry name" value="Tetrahydrodipicolinate-N-succinyltransferase, N-terminal domain"/>
    <property type="match status" value="1"/>
</dbReference>
<dbReference type="HAMAP" id="MF_00811">
    <property type="entry name" value="DapD"/>
    <property type="match status" value="1"/>
</dbReference>
<dbReference type="InterPro" id="IPR005664">
    <property type="entry name" value="DapD_Trfase_Hexpep_rpt_fam"/>
</dbReference>
<dbReference type="InterPro" id="IPR001451">
    <property type="entry name" value="Hexapep"/>
</dbReference>
<dbReference type="InterPro" id="IPR018357">
    <property type="entry name" value="Hexapep_transf_CS"/>
</dbReference>
<dbReference type="InterPro" id="IPR023180">
    <property type="entry name" value="THP_succinylTrfase_dom1"/>
</dbReference>
<dbReference type="InterPro" id="IPR037133">
    <property type="entry name" value="THP_succinylTrfase_N_sf"/>
</dbReference>
<dbReference type="InterPro" id="IPR011004">
    <property type="entry name" value="Trimer_LpxA-like_sf"/>
</dbReference>
<dbReference type="NCBIfam" id="TIGR00965">
    <property type="entry name" value="dapD"/>
    <property type="match status" value="1"/>
</dbReference>
<dbReference type="NCBIfam" id="NF008808">
    <property type="entry name" value="PRK11830.1"/>
    <property type="match status" value="1"/>
</dbReference>
<dbReference type="PANTHER" id="PTHR19136:SF52">
    <property type="entry name" value="2,3,4,5-TETRAHYDROPYRIDINE-2,6-DICARBOXYLATE N-SUCCINYLTRANSFERASE"/>
    <property type="match status" value="1"/>
</dbReference>
<dbReference type="PANTHER" id="PTHR19136">
    <property type="entry name" value="MOLYBDENUM COFACTOR GUANYLYLTRANSFERASE"/>
    <property type="match status" value="1"/>
</dbReference>
<dbReference type="Pfam" id="PF14602">
    <property type="entry name" value="Hexapep_2"/>
    <property type="match status" value="1"/>
</dbReference>
<dbReference type="Pfam" id="PF14805">
    <property type="entry name" value="THDPS_N_2"/>
    <property type="match status" value="1"/>
</dbReference>
<dbReference type="SUPFAM" id="SSF51161">
    <property type="entry name" value="Trimeric LpxA-like enzymes"/>
    <property type="match status" value="1"/>
</dbReference>
<dbReference type="PROSITE" id="PS00101">
    <property type="entry name" value="HEXAPEP_TRANSFERASES"/>
    <property type="match status" value="1"/>
</dbReference>
<organism>
    <name type="scientific">Shewanella baltica (strain OS195)</name>
    <dbReference type="NCBI Taxonomy" id="399599"/>
    <lineage>
        <taxon>Bacteria</taxon>
        <taxon>Pseudomonadati</taxon>
        <taxon>Pseudomonadota</taxon>
        <taxon>Gammaproteobacteria</taxon>
        <taxon>Alteromonadales</taxon>
        <taxon>Shewanellaceae</taxon>
        <taxon>Shewanella</taxon>
    </lineage>
</organism>
<accession>A9KUK2</accession>
<proteinExistence type="inferred from homology"/>
<feature type="chain" id="PRO_1000083757" description="2,3,4,5-tetrahydropyridine-2,6-dicarboxylate N-succinyltransferase">
    <location>
        <begin position="1"/>
        <end position="274"/>
    </location>
</feature>
<feature type="binding site" evidence="1">
    <location>
        <position position="104"/>
    </location>
    <ligand>
        <name>substrate</name>
    </ligand>
</feature>
<feature type="binding site" evidence="1">
    <location>
        <position position="141"/>
    </location>
    <ligand>
        <name>substrate</name>
    </ligand>
</feature>
<evidence type="ECO:0000255" key="1">
    <source>
        <dbReference type="HAMAP-Rule" id="MF_00811"/>
    </source>
</evidence>
<name>DAPD_SHEB9</name>
<reference key="1">
    <citation type="submission" date="2007-11" db="EMBL/GenBank/DDBJ databases">
        <title>Complete sequence of chromosome of Shewanella baltica OS195.</title>
        <authorList>
            <consortium name="US DOE Joint Genome Institute"/>
            <person name="Copeland A."/>
            <person name="Lucas S."/>
            <person name="Lapidus A."/>
            <person name="Barry K."/>
            <person name="Glavina del Rio T."/>
            <person name="Dalin E."/>
            <person name="Tice H."/>
            <person name="Pitluck S."/>
            <person name="Chain P."/>
            <person name="Malfatti S."/>
            <person name="Shin M."/>
            <person name="Vergez L."/>
            <person name="Schmutz J."/>
            <person name="Larimer F."/>
            <person name="Land M."/>
            <person name="Hauser L."/>
            <person name="Kyrpides N."/>
            <person name="Kim E."/>
            <person name="Brettar I."/>
            <person name="Rodrigues J."/>
            <person name="Konstantinidis K."/>
            <person name="Klappenbach J."/>
            <person name="Hofle M."/>
            <person name="Tiedje J."/>
            <person name="Richardson P."/>
        </authorList>
    </citation>
    <scope>NUCLEOTIDE SEQUENCE [LARGE SCALE GENOMIC DNA]</scope>
    <source>
        <strain>OS195</strain>
    </source>
</reference>
<gene>
    <name evidence="1" type="primary">dapD</name>
    <name type="ordered locus">Sbal195_1478</name>
</gene>
<keyword id="KW-0012">Acyltransferase</keyword>
<keyword id="KW-0028">Amino-acid biosynthesis</keyword>
<keyword id="KW-0963">Cytoplasm</keyword>
<keyword id="KW-0220">Diaminopimelate biosynthesis</keyword>
<keyword id="KW-0457">Lysine biosynthesis</keyword>
<keyword id="KW-0677">Repeat</keyword>
<keyword id="KW-0808">Transferase</keyword>
<comment type="catalytic activity">
    <reaction evidence="1">
        <text>(S)-2,3,4,5-tetrahydrodipicolinate + succinyl-CoA + H2O = (S)-2-succinylamino-6-oxoheptanedioate + CoA</text>
        <dbReference type="Rhea" id="RHEA:17325"/>
        <dbReference type="ChEBI" id="CHEBI:15377"/>
        <dbReference type="ChEBI" id="CHEBI:15685"/>
        <dbReference type="ChEBI" id="CHEBI:16845"/>
        <dbReference type="ChEBI" id="CHEBI:57287"/>
        <dbReference type="ChEBI" id="CHEBI:57292"/>
        <dbReference type="EC" id="2.3.1.117"/>
    </reaction>
</comment>
<comment type="pathway">
    <text evidence="1">Amino-acid biosynthesis; L-lysine biosynthesis via DAP pathway; LL-2,6-diaminopimelate from (S)-tetrahydrodipicolinate (succinylase route): step 1/3.</text>
</comment>
<comment type="subunit">
    <text evidence="1">Homotrimer.</text>
</comment>
<comment type="subcellular location">
    <subcellularLocation>
        <location evidence="1">Cytoplasm</location>
    </subcellularLocation>
</comment>
<comment type="similarity">
    <text evidence="1">Belongs to the transferase hexapeptide repeat family.</text>
</comment>
<protein>
    <recommendedName>
        <fullName evidence="1">2,3,4,5-tetrahydropyridine-2,6-dicarboxylate N-succinyltransferase</fullName>
        <ecNumber evidence="1">2.3.1.117</ecNumber>
    </recommendedName>
    <alternativeName>
        <fullName evidence="1">Tetrahydrodipicolinate N-succinyltransferase</fullName>
        <shortName evidence="1">THDP succinyltransferase</shortName>
        <shortName evidence="1">THP succinyltransferase</shortName>
        <shortName evidence="1">Tetrahydropicolinate succinylase</shortName>
    </alternativeName>
</protein>